<name>BBC3_MOUSE</name>
<reference key="1">
    <citation type="journal article" date="2001" name="Mol. Cell">
        <title>PUMA induces the rapid apoptosis of colorectal cancer cells.</title>
        <authorList>
            <person name="Yu J."/>
            <person name="Zhang L."/>
            <person name="Hwang P.M."/>
            <person name="Kinzler K.W."/>
            <person name="Vogelstein B."/>
        </authorList>
    </citation>
    <scope>NUCLEOTIDE SEQUENCE [MRNA]</scope>
</reference>
<reference key="2">
    <citation type="journal article" date="2004" name="Genome Res.">
        <title>The status, quality, and expansion of the NIH full-length cDNA project: the Mammalian Gene Collection (MGC).</title>
        <authorList>
            <consortium name="The MGC Project Team"/>
        </authorList>
    </citation>
    <scope>NUCLEOTIDE SEQUENCE [LARGE SCALE MRNA]</scope>
    <source>
        <strain>FVB/N</strain>
        <tissue>Liver</tissue>
        <tissue>Olfactory epithelium</tissue>
    </source>
</reference>
<reference key="3">
    <citation type="journal article" date="2010" name="J. Neurosci.">
        <title>Neuronal apoptosis induced by endoplasmic reticulum stress is regulated by ATF4-CHOP-mediated induction of the Bcl-2 homology 3-only member PUMA.</title>
        <authorList>
            <person name="Galehdar Z."/>
            <person name="Swan P."/>
            <person name="Fuerth B."/>
            <person name="Callaghan S.M."/>
            <person name="Park D.S."/>
            <person name="Cregan S.P."/>
        </authorList>
    </citation>
    <scope>FUNCTION</scope>
    <scope>INDUCTION</scope>
</reference>
<reference key="4">
    <citation type="journal article" date="2012" name="PLoS ONE">
        <title>CHOP potentially co-operates with FOXO3a in neuronal cells to regulate PUMA and BIM expression in response to ER stress.</title>
        <authorList>
            <person name="Ghosh A.P."/>
            <person name="Klocke B.J."/>
            <person name="Ballestas M.E."/>
            <person name="Roth K.A."/>
        </authorList>
    </citation>
    <scope>FUNCTION</scope>
</reference>
<reference key="5">
    <citation type="journal article" date="2008" name="J. Mol. Biol.">
        <title>Structure of the BH3 domains from the p53-inducible BH3-only proteins Noxa and Puma in complex with Mcl-1.</title>
        <authorList>
            <person name="Day C.L."/>
            <person name="Smits C."/>
            <person name="Fan F.C."/>
            <person name="Lee E.F."/>
            <person name="Fairlie W.D."/>
            <person name="Hinds M.G."/>
        </authorList>
    </citation>
    <scope>STRUCTURE BY NMR OF 130-155 IN COMPLEX WITH MCL1</scope>
</reference>
<reference key="6">
    <citation type="journal article" date="2008" name="Structure">
        <title>Structural plasticity underpins promiscuous binding of the prosurvival protein A1.</title>
        <authorList>
            <person name="Smits C."/>
            <person name="Czabotar P.E."/>
            <person name="Hinds M.G."/>
            <person name="Day C.L."/>
        </authorList>
    </citation>
    <scope>X-RAY CRYSTALLOGRAPHY (1.8 ANGSTROMS) OF 130-155 IN COMPLEX WITH BCL2A1</scope>
</reference>
<organism>
    <name type="scientific">Mus musculus</name>
    <name type="common">Mouse</name>
    <dbReference type="NCBI Taxonomy" id="10090"/>
    <lineage>
        <taxon>Eukaryota</taxon>
        <taxon>Metazoa</taxon>
        <taxon>Chordata</taxon>
        <taxon>Craniata</taxon>
        <taxon>Vertebrata</taxon>
        <taxon>Euteleostomi</taxon>
        <taxon>Mammalia</taxon>
        <taxon>Eutheria</taxon>
        <taxon>Euarchontoglires</taxon>
        <taxon>Glires</taxon>
        <taxon>Rodentia</taxon>
        <taxon>Myomorpha</taxon>
        <taxon>Muroidea</taxon>
        <taxon>Muridae</taxon>
        <taxon>Murinae</taxon>
        <taxon>Mus</taxon>
        <taxon>Mus</taxon>
    </lineage>
</organism>
<dbReference type="EMBL" id="AF332560">
    <property type="protein sequence ID" value="AAK31317.1"/>
    <property type="molecule type" value="mRNA"/>
</dbReference>
<dbReference type="EMBL" id="BC044782">
    <property type="protein sequence ID" value="AAH44782.1"/>
    <property type="molecule type" value="mRNA"/>
</dbReference>
<dbReference type="EMBL" id="BC060370">
    <property type="protein sequence ID" value="AAH60370.1"/>
    <property type="molecule type" value="mRNA"/>
</dbReference>
<dbReference type="CCDS" id="CCDS20847.1"/>
<dbReference type="RefSeq" id="NP_001369478.1">
    <property type="nucleotide sequence ID" value="NM_001382549.1"/>
</dbReference>
<dbReference type="RefSeq" id="NP_001369479.1">
    <property type="nucleotide sequence ID" value="NM_001382550.1"/>
</dbReference>
<dbReference type="RefSeq" id="NP_001369481.1">
    <property type="nucleotide sequence ID" value="NM_001382552.1"/>
</dbReference>
<dbReference type="RefSeq" id="NP_001390600.1">
    <property type="nucleotide sequence ID" value="NM_001403671.1"/>
</dbReference>
<dbReference type="RefSeq" id="NP_001390601.1">
    <property type="nucleotide sequence ID" value="NM_001403672.1"/>
</dbReference>
<dbReference type="RefSeq" id="NP_001390602.1">
    <property type="nucleotide sequence ID" value="NM_001403673.1"/>
</dbReference>
<dbReference type="RefSeq" id="NP_573497.1">
    <property type="nucleotide sequence ID" value="NM_133234.3"/>
</dbReference>
<dbReference type="RefSeq" id="XP_006539640.1">
    <property type="nucleotide sequence ID" value="XM_006539577.3"/>
</dbReference>
<dbReference type="RefSeq" id="XP_006539641.1">
    <property type="nucleotide sequence ID" value="XM_006539578.5"/>
</dbReference>
<dbReference type="RefSeq" id="XP_006539642.1">
    <property type="nucleotide sequence ID" value="XM_006539579.3"/>
</dbReference>
<dbReference type="RefSeq" id="XP_006539643.1">
    <property type="nucleotide sequence ID" value="XM_006539580.2"/>
</dbReference>
<dbReference type="RefSeq" id="XP_006539644.1">
    <property type="nucleotide sequence ID" value="XM_006539581.1"/>
</dbReference>
<dbReference type="RefSeq" id="XP_006539645.1">
    <property type="nucleotide sequence ID" value="XM_006539582.2"/>
</dbReference>
<dbReference type="PDB" id="2ROC">
    <property type="method" value="NMR"/>
    <property type="chains" value="B=130-155"/>
</dbReference>
<dbReference type="PDB" id="2VOF">
    <property type="method" value="X-ray"/>
    <property type="resolution" value="1.80 A"/>
    <property type="chains" value="B/D=130-155"/>
</dbReference>
<dbReference type="PDBsum" id="2ROC"/>
<dbReference type="PDBsum" id="2VOF"/>
<dbReference type="SMR" id="Q99ML1"/>
<dbReference type="BioGRID" id="228430">
    <property type="interactions" value="3"/>
</dbReference>
<dbReference type="ComplexPortal" id="CPX-2027">
    <property type="entry name" value="PUMA:BCL-2 complex"/>
</dbReference>
<dbReference type="ComplexPortal" id="CPX-2029">
    <property type="entry name" value="PUMA:BCL-XL complex"/>
</dbReference>
<dbReference type="CORUM" id="Q99ML1"/>
<dbReference type="DIP" id="DIP-29805N"/>
<dbReference type="ELM" id="Q99ML1"/>
<dbReference type="FunCoup" id="Q99ML1">
    <property type="interactions" value="217"/>
</dbReference>
<dbReference type="IntAct" id="Q99ML1">
    <property type="interactions" value="4"/>
</dbReference>
<dbReference type="STRING" id="10090.ENSMUSP00000002152"/>
<dbReference type="GlyGen" id="Q99ML1">
    <property type="glycosylation" value="2 sites"/>
</dbReference>
<dbReference type="iPTMnet" id="Q99ML1"/>
<dbReference type="PhosphoSitePlus" id="Q99ML1"/>
<dbReference type="jPOST" id="Q99ML1"/>
<dbReference type="PaxDb" id="10090-ENSMUSP00000002152"/>
<dbReference type="ProteomicsDB" id="273545"/>
<dbReference type="DNASU" id="170770"/>
<dbReference type="Ensembl" id="ENSMUST00000002152.13">
    <property type="protein sequence ID" value="ENSMUSP00000002152.7"/>
    <property type="gene ID" value="ENSMUSG00000002083.14"/>
</dbReference>
<dbReference type="GeneID" id="170770"/>
<dbReference type="KEGG" id="mmu:170770"/>
<dbReference type="UCSC" id="uc009fho.2">
    <property type="organism name" value="mouse"/>
</dbReference>
<dbReference type="AGR" id="MGI:2181667"/>
<dbReference type="CTD" id="27113"/>
<dbReference type="MGI" id="MGI:2181667">
    <property type="gene designation" value="Bbc3"/>
</dbReference>
<dbReference type="VEuPathDB" id="HostDB:ENSMUSG00000002083"/>
<dbReference type="eggNOG" id="ENOG502TECD">
    <property type="taxonomic scope" value="Eukaryota"/>
</dbReference>
<dbReference type="GeneTree" id="ENSGT00390000002767"/>
<dbReference type="HOGENOM" id="CLU_1408355_0_0_1"/>
<dbReference type="InParanoid" id="Q99ML1"/>
<dbReference type="OMA" id="GPRPDXR"/>
<dbReference type="OrthoDB" id="9836128at2759"/>
<dbReference type="PhylomeDB" id="Q99ML1"/>
<dbReference type="TreeFam" id="TF338776"/>
<dbReference type="BioGRID-ORCS" id="170770">
    <property type="hits" value="3 hits in 77 CRISPR screens"/>
</dbReference>
<dbReference type="EvolutionaryTrace" id="Q99ML1"/>
<dbReference type="PRO" id="PR:Q99ML1"/>
<dbReference type="Proteomes" id="UP000000589">
    <property type="component" value="Chromosome 7"/>
</dbReference>
<dbReference type="RNAct" id="Q99ML1">
    <property type="molecule type" value="protein"/>
</dbReference>
<dbReference type="Bgee" id="ENSMUSG00000002083">
    <property type="expression patterns" value="Expressed in embryonic brain and 186 other cell types or tissues"/>
</dbReference>
<dbReference type="ExpressionAtlas" id="Q99ML1">
    <property type="expression patterns" value="baseline and differential"/>
</dbReference>
<dbReference type="GO" id="GO:0005740">
    <property type="term" value="C:mitochondrial envelope"/>
    <property type="evidence" value="ECO:0000266"/>
    <property type="project" value="MGI"/>
</dbReference>
<dbReference type="GO" id="GO:0005739">
    <property type="term" value="C:mitochondrion"/>
    <property type="evidence" value="ECO:0000250"/>
    <property type="project" value="UniProtKB"/>
</dbReference>
<dbReference type="GO" id="GO:0097190">
    <property type="term" value="P:apoptotic signaling pathway"/>
    <property type="evidence" value="ECO:0000266"/>
    <property type="project" value="MGI"/>
</dbReference>
<dbReference type="GO" id="GO:0071456">
    <property type="term" value="P:cellular response to hypoxia"/>
    <property type="evidence" value="ECO:0007669"/>
    <property type="project" value="Ensembl"/>
</dbReference>
<dbReference type="GO" id="GO:0071479">
    <property type="term" value="P:cellular response to ionizing radiation"/>
    <property type="evidence" value="ECO:0000316"/>
    <property type="project" value="MGI"/>
</dbReference>
<dbReference type="GO" id="GO:0008340">
    <property type="term" value="P:determination of adult lifespan"/>
    <property type="evidence" value="ECO:0000316"/>
    <property type="project" value="BHF-UCL"/>
</dbReference>
<dbReference type="GO" id="GO:0006974">
    <property type="term" value="P:DNA damage response"/>
    <property type="evidence" value="ECO:0000316"/>
    <property type="project" value="BHF-UCL"/>
</dbReference>
<dbReference type="GO" id="GO:0097194">
    <property type="term" value="P:execution phase of apoptosis"/>
    <property type="evidence" value="ECO:0000250"/>
    <property type="project" value="UniProtKB"/>
</dbReference>
<dbReference type="GO" id="GO:0044346">
    <property type="term" value="P:fibroblast apoptotic process"/>
    <property type="evidence" value="ECO:0000315"/>
    <property type="project" value="MGI"/>
</dbReference>
<dbReference type="GO" id="GO:0072332">
    <property type="term" value="P:intrinsic apoptotic signaling pathway by p53 class mediator"/>
    <property type="evidence" value="ECO:0000266"/>
    <property type="project" value="MGI"/>
</dbReference>
<dbReference type="GO" id="GO:0042771">
    <property type="term" value="P:intrinsic apoptotic signaling pathway in response to DNA damage by p53 class mediator"/>
    <property type="evidence" value="ECO:0000315"/>
    <property type="project" value="MGI"/>
</dbReference>
<dbReference type="GO" id="GO:0070059">
    <property type="term" value="P:intrinsic apoptotic signaling pathway in response to endoplasmic reticulum stress"/>
    <property type="evidence" value="ECO:0000315"/>
    <property type="project" value="UniProtKB"/>
</dbReference>
<dbReference type="GO" id="GO:0070227">
    <property type="term" value="P:lymphocyte apoptotic process"/>
    <property type="evidence" value="ECO:0000315"/>
    <property type="project" value="MGI"/>
</dbReference>
<dbReference type="GO" id="GO:0030308">
    <property type="term" value="P:negative regulation of cell growth"/>
    <property type="evidence" value="ECO:0000266"/>
    <property type="project" value="MGI"/>
</dbReference>
<dbReference type="GO" id="GO:1903749">
    <property type="term" value="P:positive regulation of establishment of protein localization to mitochondrion"/>
    <property type="evidence" value="ECO:0000315"/>
    <property type="project" value="MGI"/>
</dbReference>
<dbReference type="GO" id="GO:2000271">
    <property type="term" value="P:positive regulation of fibroblast apoptotic process"/>
    <property type="evidence" value="ECO:0000315"/>
    <property type="project" value="MGI"/>
</dbReference>
<dbReference type="GO" id="GO:2001244">
    <property type="term" value="P:positive regulation of intrinsic apoptotic signaling pathway"/>
    <property type="evidence" value="ECO:0000250"/>
    <property type="project" value="UniProtKB"/>
</dbReference>
<dbReference type="GO" id="GO:0070230">
    <property type="term" value="P:positive regulation of lymphocyte apoptotic process"/>
    <property type="evidence" value="ECO:0000315"/>
    <property type="project" value="MGI"/>
</dbReference>
<dbReference type="GO" id="GO:0043525">
    <property type="term" value="P:positive regulation of neuron apoptotic process"/>
    <property type="evidence" value="ECO:0000315"/>
    <property type="project" value="UniProtKB"/>
</dbReference>
<dbReference type="GO" id="GO:0031334">
    <property type="term" value="P:positive regulation of protein-containing complex assembly"/>
    <property type="evidence" value="ECO:0007669"/>
    <property type="project" value="Ensembl"/>
</dbReference>
<dbReference type="GO" id="GO:0090200">
    <property type="term" value="P:positive regulation of release of cytochrome c from mitochondria"/>
    <property type="evidence" value="ECO:0007669"/>
    <property type="project" value="Ensembl"/>
</dbReference>
<dbReference type="GO" id="GO:0070234">
    <property type="term" value="P:positive regulation of T cell apoptotic process"/>
    <property type="evidence" value="ECO:0000315"/>
    <property type="project" value="MGI"/>
</dbReference>
<dbReference type="GO" id="GO:0070245">
    <property type="term" value="P:positive regulation of thymocyte apoptotic process"/>
    <property type="evidence" value="ECO:0000316"/>
    <property type="project" value="BHF-UCL"/>
</dbReference>
<dbReference type="GO" id="GO:0001836">
    <property type="term" value="P:release of cytochrome c from mitochondria"/>
    <property type="evidence" value="ECO:0000250"/>
    <property type="project" value="UniProtKB"/>
</dbReference>
<dbReference type="GO" id="GO:0034976">
    <property type="term" value="P:response to endoplasmic reticulum stress"/>
    <property type="evidence" value="ECO:0000314"/>
    <property type="project" value="UniProtKB"/>
</dbReference>
<dbReference type="GO" id="GO:0070231">
    <property type="term" value="P:T cell apoptotic process"/>
    <property type="evidence" value="ECO:0000315"/>
    <property type="project" value="MGI"/>
</dbReference>
<dbReference type="DisProt" id="DP01794"/>
<dbReference type="InterPro" id="IPR031661">
    <property type="entry name" value="Bbc3"/>
</dbReference>
<dbReference type="PANTHER" id="PTHR28639">
    <property type="entry name" value="BCL-2-BINDING COMPONENT 3"/>
    <property type="match status" value="1"/>
</dbReference>
<dbReference type="PANTHER" id="PTHR28639:SF1">
    <property type="entry name" value="BCL-2-BINDING COMPONENT 3, ISOFORMS 3_4"/>
    <property type="match status" value="1"/>
</dbReference>
<dbReference type="Pfam" id="PF15826">
    <property type="entry name" value="PUMA"/>
    <property type="match status" value="1"/>
</dbReference>
<sequence length="193" mass="20749">MARARQEGSSPEPVEGLARDSPRPFPLGRLMPSAVSCSLCEPGLPAAPAAPALLPAAYLCAPTAPPAVTAALGGPRWPGGHRSRPRGPRPDGPQPSLSPAQQHLESPVPSAPEALAGGPTQAAPGVRVEEEEWAREIGAQLRRMADDLNAQYERRRQEEQHRHRPSPWRVMYNLFMGLLPLPRDPGAPEMEPN</sequence>
<proteinExistence type="evidence at protein level"/>
<evidence type="ECO:0000250" key="1"/>
<evidence type="ECO:0000250" key="2">
    <source>
        <dbReference type="UniProtKB" id="Q80ZG6"/>
    </source>
</evidence>
<evidence type="ECO:0000250" key="3">
    <source>
        <dbReference type="UniProtKB" id="Q9BXH1"/>
    </source>
</evidence>
<evidence type="ECO:0000256" key="4">
    <source>
        <dbReference type="SAM" id="MobiDB-lite"/>
    </source>
</evidence>
<evidence type="ECO:0000269" key="5">
    <source>
    </source>
</evidence>
<evidence type="ECO:0000269" key="6">
    <source>
    </source>
</evidence>
<evidence type="ECO:0000269" key="7">
    <source>
    </source>
</evidence>
<evidence type="ECO:0000269" key="8">
    <source>
    </source>
</evidence>
<evidence type="ECO:0000305" key="9"/>
<evidence type="ECO:0007829" key="10">
    <source>
        <dbReference type="PDB" id="2VOF"/>
    </source>
</evidence>
<protein>
    <recommendedName>
        <fullName>Bcl-2-binding component 3</fullName>
    </recommendedName>
    <alternativeName>
        <fullName>p53 up-regulated modulator of apoptosis</fullName>
    </alternativeName>
</protein>
<comment type="function">
    <text evidence="3 7 8">Essential mediator of p53/TP53-dependent and p53/TP53-independent apoptosis (By similarity). Promotes partial unfolding of BCL2L1 and dissociation of BCL2L1 from p53/TP53, releasing the bound p53/TP53 to induce apoptosis (By similarity). Regulates ER stress-induced neuronal apoptosis (PubMed:21159964, PubMed:22761832).</text>
</comment>
<comment type="subunit">
    <text evidence="2 3 5 6">Interacts with MCL1 and BCL2A1 (PubMed:18462686, PubMed:18589438). Interacts with BCL2 and BCL2L1/BCL-XL (By similarity). Interacts (via BH3 domain) with NOL3 (via CARD domain); this interaction prevents BBC3 association with BCL2 and results in CASP8 activation (By similarity).</text>
</comment>
<comment type="interaction">
    <interactant intactId="EBI-727801">
        <id>Q99ML1</id>
    </interactant>
    <interactant intactId="EBI-707754">
        <id>Q07440</id>
        <label>Bcl2a1</label>
    </interactant>
    <organismsDiffer>false</organismsDiffer>
    <experiments>2</experiments>
</comment>
<comment type="interaction">
    <interactant intactId="EBI-727801">
        <id>Q99ML1</id>
    </interactant>
    <interactant intactId="EBI-707292">
        <id>P97287</id>
        <label>Mcl1</label>
    </interactant>
    <organismsDiffer>false</organismsDiffer>
    <experiments>2</experiments>
</comment>
<comment type="interaction">
    <interactant intactId="EBI-727801">
        <id>Q99ML1</id>
    </interactant>
    <interactant intactId="EBI-287195">
        <id>Q07817-1</id>
        <label>BCL2L1</label>
    </interactant>
    <organismsDiffer>true</organismsDiffer>
    <experiments>3</experiments>
</comment>
<comment type="subcellular location">
    <subcellularLocation>
        <location>Mitochondrion</location>
    </subcellularLocation>
    <text evidence="1">Localized to the mitochondria in order to induce cytochrome c release.</text>
</comment>
<comment type="induction">
    <text evidence="1 7">By DNA damage, glucocorticoid treatment, growth factor deprivation and p53 (By similarity). By ER stress in a DDIT3/CHOP-dependent manner.</text>
</comment>
<comment type="domain">
    <text evidence="3 6">The BH3 motif is intrinsically disordered in the absence of a binding partner but folds upon binding (PubMed:18589438). Folds when bound to BCL2L1 (By similarity). Also folds when bound to MCL1 (PubMed:18589438).</text>
</comment>
<comment type="similarity">
    <text evidence="9">Belongs to the Bcl-2 family.</text>
</comment>
<accession>Q99ML1</accession>
<gene>
    <name type="primary">Bbc3</name>
    <name type="synonym">Puma</name>
</gene>
<feature type="chain" id="PRO_0000143084" description="Bcl-2-binding component 3">
    <location>
        <begin position="1"/>
        <end position="193"/>
    </location>
</feature>
<feature type="region of interest" description="Disordered" evidence="4">
    <location>
        <begin position="1"/>
        <end position="31"/>
    </location>
</feature>
<feature type="region of interest" description="Disordered" evidence="4">
    <location>
        <begin position="71"/>
        <end position="131"/>
    </location>
</feature>
<feature type="short sequence motif" description="BH3">
    <location>
        <begin position="137"/>
        <end position="151"/>
    </location>
</feature>
<feature type="modified residue" description="Phosphoserine" evidence="3">
    <location>
        <position position="10"/>
    </location>
</feature>
<feature type="helix" evidence="10">
    <location>
        <begin position="132"/>
        <end position="151"/>
    </location>
</feature>
<keyword id="KW-0002">3D-structure</keyword>
<keyword id="KW-0053">Apoptosis</keyword>
<keyword id="KW-0496">Mitochondrion</keyword>
<keyword id="KW-0597">Phosphoprotein</keyword>
<keyword id="KW-1185">Reference proteome</keyword>